<accession>Q84706</accession>
<organismHost>
    <name type="scientific">Sus scrofa</name>
    <name type="common">Pig</name>
    <dbReference type="NCBI Taxonomy" id="9823"/>
</organismHost>
<comment type="function">
    <text evidence="1">Plays a central role in virus morphogenesis and assembly. Acts as a viroporin and self-assembles in host membranes forming pentameric protein-lipid pores that allow ion transport. Also plays a role in the induction of apoptosis (By similarity). Counteracts the production of type I interferon by interacting with host IRF3 component and preventing its translocation to the host nucleus.</text>
</comment>
<comment type="subunit">
    <text evidence="1 2">Homopentamer. Interacts with membrane protein M in the budding compartment of the host cell, which is located between endoplasmic reticulum and the Golgi complex. Interacts with Nucleoprotein (By similarity). Interacts with host IRF3; this interaction inhibits type I IFN production (PubMed:33486326).</text>
</comment>
<comment type="subcellular location">
    <subcellularLocation>
        <location evidence="1">Host Golgi apparatus membrane</location>
        <topology evidence="1">Single-pass type III membrane protein</topology>
    </subcellularLocation>
    <subcellularLocation>
        <location evidence="2">Host endoplasmic reticulum</location>
    </subcellularLocation>
    <text evidence="1">The cytoplasmic tail functions as a Golgi complex-targeting signal.</text>
</comment>
<comment type="similarity">
    <text evidence="1">Belongs to the alphacoronaviruses E protein family.</text>
</comment>
<name>VEMP_PEDV7</name>
<proteinExistence type="evidence at protein level"/>
<keyword id="KW-0053">Apoptosis</keyword>
<keyword id="KW-1038">Host endoplasmic reticulum</keyword>
<keyword id="KW-1040">Host Golgi apparatus</keyword>
<keyword id="KW-1043">Host membrane</keyword>
<keyword id="KW-0945">Host-virus interaction</keyword>
<keyword id="KW-1090">Inhibition of host innate immune response by virus</keyword>
<keyword id="KW-1092">Inhibition of host IRF3 by virus</keyword>
<keyword id="KW-1113">Inhibition of host RLR pathway by virus</keyword>
<keyword id="KW-0472">Membrane</keyword>
<keyword id="KW-0812">Transmembrane</keyword>
<keyword id="KW-1133">Transmembrane helix</keyword>
<keyword id="KW-0899">Viral immunoevasion</keyword>
<protein>
    <recommendedName>
        <fullName evidence="1">Envelope small membrane protein</fullName>
        <shortName evidence="1">E protein</shortName>
        <shortName evidence="1">sM protein</shortName>
    </recommendedName>
</protein>
<sequence length="76" mass="8810">MLQLVNDNGLVVNVILWLFVLFFLLIISITFVQLVNLCFTCHRLCNSAVYTPIGRLYRVYKSYMRIDPLPSTVIDV</sequence>
<dbReference type="EMBL" id="Z24733">
    <property type="protein sequence ID" value="CAA80856.1"/>
    <property type="molecule type" value="Genomic_RNA"/>
</dbReference>
<dbReference type="EMBL" id="AF353511">
    <property type="protein sequence ID" value="AAK38658.1"/>
    <property type="molecule type" value="Genomic_RNA"/>
</dbReference>
<dbReference type="PIR" id="C49591">
    <property type="entry name" value="C49591"/>
</dbReference>
<dbReference type="RefSeq" id="NP_598312.1">
    <property type="nucleotide sequence ID" value="NC_003436.1"/>
</dbReference>
<dbReference type="KEGG" id="vg:935180"/>
<dbReference type="Proteomes" id="UP000008159">
    <property type="component" value="Segment"/>
</dbReference>
<dbReference type="GO" id="GO:0044165">
    <property type="term" value="C:host cell endoplasmic reticulum"/>
    <property type="evidence" value="ECO:0000314"/>
    <property type="project" value="CACAO"/>
</dbReference>
<dbReference type="GO" id="GO:0044178">
    <property type="term" value="C:host cell Golgi membrane"/>
    <property type="evidence" value="ECO:0007669"/>
    <property type="project" value="UniProtKB-SubCell"/>
</dbReference>
<dbReference type="GO" id="GO:0042025">
    <property type="term" value="C:host cell nucleus"/>
    <property type="evidence" value="ECO:0000314"/>
    <property type="project" value="CACAO"/>
</dbReference>
<dbReference type="GO" id="GO:0016020">
    <property type="term" value="C:membrane"/>
    <property type="evidence" value="ECO:0007669"/>
    <property type="project" value="UniProtKB-UniRule"/>
</dbReference>
<dbReference type="GO" id="GO:0140975">
    <property type="term" value="P:disruption of cellular anatomical structure in another organism"/>
    <property type="evidence" value="ECO:0007669"/>
    <property type="project" value="UniProtKB-UniRule"/>
</dbReference>
<dbReference type="GO" id="GO:0039548">
    <property type="term" value="P:symbiont-mediated suppression of host cytoplasmic pattern recognition receptor signaling pathway via inhibition of IRF3 activity"/>
    <property type="evidence" value="ECO:0007669"/>
    <property type="project" value="UniProtKB-KW"/>
</dbReference>
<dbReference type="GO" id="GO:0046760">
    <property type="term" value="P:viral budding from Golgi membrane"/>
    <property type="evidence" value="ECO:0007669"/>
    <property type="project" value="UniProtKB-UniRule"/>
</dbReference>
<dbReference type="HAMAP" id="MF_04205">
    <property type="entry name" value="ALPHA_CORONA_E"/>
    <property type="match status" value="1"/>
</dbReference>
<dbReference type="InterPro" id="IPR043507">
    <property type="entry name" value="E_protein_aCoV"/>
</dbReference>
<dbReference type="InterPro" id="IPR003873">
    <property type="entry name" value="E_protein_CoV"/>
</dbReference>
<dbReference type="Pfam" id="PF02723">
    <property type="entry name" value="CoV_E"/>
    <property type="match status" value="1"/>
</dbReference>
<dbReference type="PROSITE" id="PS51926">
    <property type="entry name" value="COV_E"/>
    <property type="match status" value="1"/>
</dbReference>
<evidence type="ECO:0000255" key="1">
    <source>
        <dbReference type="HAMAP-Rule" id="MF_04205"/>
    </source>
</evidence>
<evidence type="ECO:0000269" key="2">
    <source>
    </source>
</evidence>
<reference key="1">
    <citation type="journal article" date="1994" name="Virology">
        <title>Sequence analysis of the porcine epidemic diarrhea virus genome between the nucleocapsid and spike protein genes reveals a polymorphic ORF.</title>
        <authorList>
            <person name="Duarte M."/>
            <person name="Tobler K."/>
            <person name="Bridgen A."/>
            <person name="Rasschaert D."/>
            <person name="Ackermann M."/>
            <person name="Laude H."/>
        </authorList>
    </citation>
    <scope>NUCLEOTIDE SEQUENCE [GENOMIC RNA]</scope>
</reference>
<reference key="2">
    <citation type="journal article" date="1998" name="Adv. Exp. Med. Biol.">
        <title>Further analysis of the genome of porcine epidemic diarrhea virus.</title>
        <authorList>
            <person name="Bridgen A."/>
            <person name="Kocherhans R."/>
            <person name="Tobler K."/>
            <person name="Carvajal A."/>
            <person name="Ackermann M."/>
        </authorList>
    </citation>
    <scope>NUCLEOTIDE SEQUENCE [GENOMIC RNA]</scope>
</reference>
<reference key="3">
    <citation type="journal article" date="2001" name="Virus Genes">
        <title>Completion of the porcine epidemic diarrhoea coronavirus (PEDV) genome sequence.</title>
        <authorList>
            <person name="Kocherhans R."/>
            <person name="Bridgen A."/>
            <person name="Ackermann M."/>
            <person name="Tobler K."/>
        </authorList>
    </citation>
    <scope>NUCLEOTIDE SEQUENCE [GENOMIC RNA]</scope>
</reference>
<reference key="4">
    <citation type="journal article" date="2021" name="Vet. Microbiol.">
        <title>Porcine epidemic diarrhea virus E protein suppresses RIG-I signaling-mediated interferon-beta production.</title>
        <authorList>
            <person name="Zheng L."/>
            <person name="Wang X."/>
            <person name="Guo D."/>
            <person name="Cao J."/>
            <person name="Cheng L."/>
            <person name="Li X."/>
            <person name="Zou D."/>
            <person name="Zhang Y."/>
            <person name="Xu J."/>
            <person name="Wu X."/>
            <person name="Shen Y."/>
            <person name="Wang H."/>
            <person name="Yu W."/>
            <person name="Li L."/>
            <person name="Xiao L."/>
            <person name="Song B."/>
            <person name="Ma J."/>
            <person name="Liu X."/>
            <person name="Li P."/>
            <person name="Xu S."/>
            <person name="Xu X."/>
            <person name="Zhang H."/>
            <person name="Wu Z."/>
            <person name="Cao H."/>
        </authorList>
    </citation>
    <scope>FUNCTION</scope>
    <scope>SUBCELLULAR LOCATION</scope>
    <scope>INTERACTION WITH HOST IRF3</scope>
</reference>
<gene>
    <name evidence="1" type="primary">E</name>
    <name type="synonym">sM</name>
    <name type="ORF">4</name>
</gene>
<organism>
    <name type="scientific">Porcine epidemic diarrhea virus (strain CV777)</name>
    <name type="common">PEDV</name>
    <dbReference type="NCBI Taxonomy" id="229032"/>
    <lineage>
        <taxon>Viruses</taxon>
        <taxon>Riboviria</taxon>
        <taxon>Orthornavirae</taxon>
        <taxon>Pisuviricota</taxon>
        <taxon>Pisoniviricetes</taxon>
        <taxon>Nidovirales</taxon>
        <taxon>Cornidovirineae</taxon>
        <taxon>Coronaviridae</taxon>
        <taxon>Orthocoronavirinae</taxon>
        <taxon>Alphacoronavirus</taxon>
        <taxon>Pedacovirus</taxon>
        <taxon>Porcine epidemic diarrhea virus</taxon>
    </lineage>
</organism>
<feature type="chain" id="PRO_0000283980" description="Envelope small membrane protein">
    <location>
        <begin position="1"/>
        <end position="76"/>
    </location>
</feature>
<feature type="topological domain" description="Virion surface" evidence="1">
    <location>
        <begin position="1"/>
        <end position="14"/>
    </location>
</feature>
<feature type="transmembrane region" description="Helical" evidence="1">
    <location>
        <begin position="15"/>
        <end position="35"/>
    </location>
</feature>
<feature type="topological domain" description="Intravirion" evidence="1">
    <location>
        <begin position="36"/>
        <end position="76"/>
    </location>
</feature>